<protein>
    <recommendedName>
        <fullName>Probable spore germination protein GerPF</fullName>
    </recommendedName>
</protein>
<accession>P62185</accession>
<accession>O68688</accession>
<evidence type="ECO:0000305" key="1"/>
<sequence>MPSVVGNLVVQNSNGSFNLGDFYNVSPKENTKAYNGSGASNVGFVVNTFNGVSATNTFDSDVADQDQIGTA</sequence>
<reference key="1">
    <citation type="journal article" date="2003" name="Nature">
        <title>Genome sequence of Bacillus cereus and comparative analysis with Bacillus anthracis.</title>
        <authorList>
            <person name="Ivanova N."/>
            <person name="Sorokin A."/>
            <person name="Anderson I."/>
            <person name="Galleron N."/>
            <person name="Candelon B."/>
            <person name="Kapatral V."/>
            <person name="Bhattacharyya A."/>
            <person name="Reznik G."/>
            <person name="Mikhailova N."/>
            <person name="Lapidus A."/>
            <person name="Chu L."/>
            <person name="Mazur M."/>
            <person name="Goltsman E."/>
            <person name="Larsen N."/>
            <person name="D'Souza M."/>
            <person name="Walunas T."/>
            <person name="Grechkin Y."/>
            <person name="Pusch G."/>
            <person name="Haselkorn R."/>
            <person name="Fonstein M."/>
            <person name="Ehrlich S.D."/>
            <person name="Overbeek R."/>
            <person name="Kyrpides N.C."/>
        </authorList>
    </citation>
    <scope>NUCLEOTIDE SEQUENCE [LARGE SCALE GENOMIC DNA]</scope>
    <source>
        <strain>ATCC 14579 / DSM 31 / CCUG 7414 / JCM 2152 / NBRC 15305 / NCIMB 9373 / NCTC 2599 / NRRL B-3711</strain>
    </source>
</reference>
<dbReference type="EMBL" id="AE016877">
    <property type="protein sequence ID" value="AAP08127.1"/>
    <property type="status" value="ALT_INIT"/>
    <property type="molecule type" value="Genomic_DNA"/>
</dbReference>
<dbReference type="RefSeq" id="NP_830926.1">
    <property type="nucleotide sequence ID" value="NC_004722.1"/>
</dbReference>
<dbReference type="RefSeq" id="WP_001141566.1">
    <property type="nucleotide sequence ID" value="NZ_CP138336.1"/>
</dbReference>
<dbReference type="STRING" id="226900.BC_1140"/>
<dbReference type="GeneID" id="93009899"/>
<dbReference type="KEGG" id="bce:BC1140"/>
<dbReference type="PATRIC" id="fig|226900.8.peg.1103"/>
<dbReference type="HOGENOM" id="CLU_173188_2_1_9"/>
<dbReference type="OrthoDB" id="2476480at2"/>
<dbReference type="Proteomes" id="UP000001417">
    <property type="component" value="Chromosome"/>
</dbReference>
<dbReference type="GO" id="GO:0030435">
    <property type="term" value="P:sporulation resulting in formation of a cellular spore"/>
    <property type="evidence" value="ECO:0007669"/>
    <property type="project" value="UniProtKB-KW"/>
</dbReference>
<dbReference type="InterPro" id="IPR019618">
    <property type="entry name" value="Spore_germination_GerPA"/>
</dbReference>
<dbReference type="PANTHER" id="PTHR37808:SF1">
    <property type="entry name" value="SPORE GERMINATION PROTEIN-LIKE PROTEIN YDZR"/>
    <property type="match status" value="1"/>
</dbReference>
<dbReference type="PANTHER" id="PTHR37808">
    <property type="entry name" value="SPORE GERMINATION PROTEIN-LIKE PROTEIN YDZR-RELATED"/>
    <property type="match status" value="1"/>
</dbReference>
<dbReference type="Pfam" id="PF10676">
    <property type="entry name" value="gerPA"/>
    <property type="match status" value="1"/>
</dbReference>
<proteinExistence type="inferred from homology"/>
<comment type="function">
    <text>Required for the formation of functionally normal spores. Could be involved in the establishment of normal spore coat structure and/or permeability, which allows the access of germinants to their receptor.</text>
</comment>
<comment type="similarity">
    <text evidence="1">Belongs to the GerPA/GerPF family.</text>
</comment>
<comment type="sequence caution" evidence="1">
    <conflict type="erroneous initiation">
        <sequence resource="EMBL-CDS" id="AAP08127"/>
    </conflict>
</comment>
<name>GERPF_BACCR</name>
<keyword id="KW-0309">Germination</keyword>
<keyword id="KW-1185">Reference proteome</keyword>
<keyword id="KW-0749">Sporulation</keyword>
<gene>
    <name type="primary">gerPF</name>
    <name type="ordered locus">BC_1140</name>
</gene>
<feature type="chain" id="PRO_0000105876" description="Probable spore germination protein GerPF">
    <location>
        <begin position="1"/>
        <end position="71"/>
    </location>
</feature>
<organism>
    <name type="scientific">Bacillus cereus (strain ATCC 14579 / DSM 31 / CCUG 7414 / JCM 2152 / NBRC 15305 / NCIMB 9373 / NCTC 2599 / NRRL B-3711)</name>
    <dbReference type="NCBI Taxonomy" id="226900"/>
    <lineage>
        <taxon>Bacteria</taxon>
        <taxon>Bacillati</taxon>
        <taxon>Bacillota</taxon>
        <taxon>Bacilli</taxon>
        <taxon>Bacillales</taxon>
        <taxon>Bacillaceae</taxon>
        <taxon>Bacillus</taxon>
        <taxon>Bacillus cereus group</taxon>
    </lineage>
</organism>